<proteinExistence type="evidence at transcript level"/>
<feature type="chain" id="PRO_0000424257" description="Urease accessory protein G">
    <location>
        <begin position="1"/>
        <end position="284"/>
    </location>
</feature>
<feature type="region of interest" description="Disordered" evidence="2">
    <location>
        <begin position="1"/>
        <end position="51"/>
    </location>
</feature>
<feature type="compositionally biased region" description="Basic and acidic residues" evidence="2">
    <location>
        <begin position="15"/>
        <end position="29"/>
    </location>
</feature>
<feature type="compositionally biased region" description="Basic and acidic residues" evidence="2">
    <location>
        <begin position="41"/>
        <end position="51"/>
    </location>
</feature>
<feature type="binding site" evidence="1">
    <location>
        <begin position="89"/>
        <end position="96"/>
    </location>
    <ligand>
        <name>GTP</name>
        <dbReference type="ChEBI" id="CHEBI:37565"/>
    </ligand>
</feature>
<dbReference type="EMBL" id="AC124143">
    <property type="protein sequence ID" value="AAT77406.1"/>
    <property type="molecule type" value="Genomic_DNA"/>
</dbReference>
<dbReference type="EMBL" id="AP008211">
    <property type="protein sequence ID" value="BAF18251.1"/>
    <property type="molecule type" value="Genomic_DNA"/>
</dbReference>
<dbReference type="EMBL" id="AP014961">
    <property type="protein sequence ID" value="BAS95364.1"/>
    <property type="molecule type" value="Genomic_DNA"/>
</dbReference>
<dbReference type="EMBL" id="CM000142">
    <property type="protein sequence ID" value="EEE64708.1"/>
    <property type="molecule type" value="Genomic_DNA"/>
</dbReference>
<dbReference type="EMBL" id="AK067090">
    <property type="protein sequence ID" value="BAG90262.1"/>
    <property type="molecule type" value="mRNA"/>
</dbReference>
<dbReference type="EMBL" id="AK104200">
    <property type="protein sequence ID" value="BAG96498.1"/>
    <property type="molecule type" value="mRNA"/>
</dbReference>
<dbReference type="EMBL" id="AK104368">
    <property type="protein sequence ID" value="BAG96627.1"/>
    <property type="molecule type" value="mRNA"/>
</dbReference>
<dbReference type="RefSeq" id="XP_015640065.1">
    <property type="nucleotide sequence ID" value="XM_015784579.1"/>
</dbReference>
<dbReference type="SMR" id="Q6AUF3"/>
<dbReference type="FunCoup" id="Q6AUF3">
    <property type="interactions" value="637"/>
</dbReference>
<dbReference type="STRING" id="39947.Q6AUF3"/>
<dbReference type="CarbonylDB" id="Q6AUF3"/>
<dbReference type="iPTMnet" id="Q6AUF3"/>
<dbReference type="PaxDb" id="39947-Q6AUF3"/>
<dbReference type="EnsemblPlants" id="Os05t0565200-01">
    <property type="protein sequence ID" value="Os05t0565200-01"/>
    <property type="gene ID" value="Os05g0565200"/>
</dbReference>
<dbReference type="Gramene" id="Os05t0565200-01">
    <property type="protein sequence ID" value="Os05t0565200-01"/>
    <property type="gene ID" value="Os05g0565200"/>
</dbReference>
<dbReference type="KEGG" id="dosa:Os05g0565200"/>
<dbReference type="eggNOG" id="ENOG502QR6E">
    <property type="taxonomic scope" value="Eukaryota"/>
</dbReference>
<dbReference type="HOGENOM" id="CLU_072144_0_0_1"/>
<dbReference type="InParanoid" id="Q6AUF3"/>
<dbReference type="OMA" id="KMRGDKP"/>
<dbReference type="OrthoDB" id="10063137at2759"/>
<dbReference type="Proteomes" id="UP000000763">
    <property type="component" value="Chromosome 5"/>
</dbReference>
<dbReference type="Proteomes" id="UP000007752">
    <property type="component" value="Chromosome 5"/>
</dbReference>
<dbReference type="Proteomes" id="UP000059680">
    <property type="component" value="Chromosome 5"/>
</dbReference>
<dbReference type="GO" id="GO:0005525">
    <property type="term" value="F:GTP binding"/>
    <property type="evidence" value="ECO:0007669"/>
    <property type="project" value="UniProtKB-KW"/>
</dbReference>
<dbReference type="GO" id="GO:0003924">
    <property type="term" value="F:GTPase activity"/>
    <property type="evidence" value="ECO:0007669"/>
    <property type="project" value="InterPro"/>
</dbReference>
<dbReference type="GO" id="GO:0016151">
    <property type="term" value="F:nickel cation binding"/>
    <property type="evidence" value="ECO:0007669"/>
    <property type="project" value="InterPro"/>
</dbReference>
<dbReference type="GO" id="GO:0043419">
    <property type="term" value="P:urea catabolic process"/>
    <property type="evidence" value="ECO:0007669"/>
    <property type="project" value="InterPro"/>
</dbReference>
<dbReference type="CDD" id="cd05540">
    <property type="entry name" value="UreG"/>
    <property type="match status" value="1"/>
</dbReference>
<dbReference type="FunFam" id="3.40.50.300:FF:000208">
    <property type="entry name" value="Urease accessory protein UreG"/>
    <property type="match status" value="1"/>
</dbReference>
<dbReference type="Gene3D" id="3.40.50.300">
    <property type="entry name" value="P-loop containing nucleotide triphosphate hydrolases"/>
    <property type="match status" value="1"/>
</dbReference>
<dbReference type="HAMAP" id="MF_01389">
    <property type="entry name" value="UreG"/>
    <property type="match status" value="1"/>
</dbReference>
<dbReference type="InterPro" id="IPR003495">
    <property type="entry name" value="CobW/HypB/UreG_nucleotide-bd"/>
</dbReference>
<dbReference type="InterPro" id="IPR027417">
    <property type="entry name" value="P-loop_NTPase"/>
</dbReference>
<dbReference type="InterPro" id="IPR004400">
    <property type="entry name" value="UreG"/>
</dbReference>
<dbReference type="NCBIfam" id="TIGR00101">
    <property type="entry name" value="ureG"/>
    <property type="match status" value="1"/>
</dbReference>
<dbReference type="PANTHER" id="PTHR31715">
    <property type="entry name" value="UREASE ACCESSORY PROTEIN G"/>
    <property type="match status" value="1"/>
</dbReference>
<dbReference type="PANTHER" id="PTHR31715:SF0">
    <property type="entry name" value="UREASE ACCESSORY PROTEIN G"/>
    <property type="match status" value="1"/>
</dbReference>
<dbReference type="Pfam" id="PF02492">
    <property type="entry name" value="cobW"/>
    <property type="match status" value="1"/>
</dbReference>
<dbReference type="SUPFAM" id="SSF52540">
    <property type="entry name" value="P-loop containing nucleoside triphosphate hydrolases"/>
    <property type="match status" value="1"/>
</dbReference>
<comment type="function">
    <text evidence="1">Required for the maturation and activation of urease via the functional incorporation of the urease nickel metallocenter.</text>
</comment>
<comment type="subunit">
    <text evidence="1">URED, UREF and UREG may form a complex that acts as a GTP-hydrolysis-dependent molecular chaperone, activating the urease apoprotein.</text>
</comment>
<comment type="similarity">
    <text evidence="3">Belongs to the SIMIBI class G3E GTPase family. UreG subfamily.</text>
</comment>
<protein>
    <recommendedName>
        <fullName>Urease accessory protein G</fullName>
        <shortName>AtUREG</shortName>
    </recommendedName>
</protein>
<keyword id="KW-0143">Chaperone</keyword>
<keyword id="KW-0342">GTP-binding</keyword>
<keyword id="KW-0996">Nickel insertion</keyword>
<keyword id="KW-0547">Nucleotide-binding</keyword>
<keyword id="KW-1185">Reference proteome</keyword>
<name>UREG_ORYSJ</name>
<evidence type="ECO:0000250" key="1"/>
<evidence type="ECO:0000256" key="2">
    <source>
        <dbReference type="SAM" id="MobiDB-lite"/>
    </source>
</evidence>
<evidence type="ECO:0000305" key="3"/>
<reference key="1">
    <citation type="journal article" date="2005" name="Mol. Genet. Genomics">
        <title>A fine physical map of the rice chromosome 5.</title>
        <authorList>
            <person name="Cheng C.-H."/>
            <person name="Chung M.C."/>
            <person name="Liu S.-M."/>
            <person name="Chen S.-K."/>
            <person name="Kao F.Y."/>
            <person name="Lin S.-J."/>
            <person name="Hsiao S.-H."/>
            <person name="Tseng I.C."/>
            <person name="Hsing Y.-I.C."/>
            <person name="Wu H.-P."/>
            <person name="Chen C.-S."/>
            <person name="Shaw J.-F."/>
            <person name="Wu J."/>
            <person name="Matsumoto T."/>
            <person name="Sasaki T."/>
            <person name="Chen H.-C."/>
            <person name="Chow T.-Y."/>
        </authorList>
    </citation>
    <scope>NUCLEOTIDE SEQUENCE [LARGE SCALE GENOMIC DNA]</scope>
    <source>
        <strain>cv. Nipponbare</strain>
    </source>
</reference>
<reference key="2">
    <citation type="journal article" date="2005" name="Nature">
        <title>The map-based sequence of the rice genome.</title>
        <authorList>
            <consortium name="International rice genome sequencing project (IRGSP)"/>
        </authorList>
    </citation>
    <scope>NUCLEOTIDE SEQUENCE [LARGE SCALE GENOMIC DNA]</scope>
    <source>
        <strain>cv. Nipponbare</strain>
    </source>
</reference>
<reference key="3">
    <citation type="journal article" date="2008" name="Nucleic Acids Res.">
        <title>The rice annotation project database (RAP-DB): 2008 update.</title>
        <authorList>
            <consortium name="The rice annotation project (RAP)"/>
        </authorList>
    </citation>
    <scope>GENOME REANNOTATION</scope>
    <source>
        <strain>cv. Nipponbare</strain>
    </source>
</reference>
<reference key="4">
    <citation type="journal article" date="2013" name="Rice">
        <title>Improvement of the Oryza sativa Nipponbare reference genome using next generation sequence and optical map data.</title>
        <authorList>
            <person name="Kawahara Y."/>
            <person name="de la Bastide M."/>
            <person name="Hamilton J.P."/>
            <person name="Kanamori H."/>
            <person name="McCombie W.R."/>
            <person name="Ouyang S."/>
            <person name="Schwartz D.C."/>
            <person name="Tanaka T."/>
            <person name="Wu J."/>
            <person name="Zhou S."/>
            <person name="Childs K.L."/>
            <person name="Davidson R.M."/>
            <person name="Lin H."/>
            <person name="Quesada-Ocampo L."/>
            <person name="Vaillancourt B."/>
            <person name="Sakai H."/>
            <person name="Lee S.S."/>
            <person name="Kim J."/>
            <person name="Numa H."/>
            <person name="Itoh T."/>
            <person name="Buell C.R."/>
            <person name="Matsumoto T."/>
        </authorList>
    </citation>
    <scope>GENOME REANNOTATION</scope>
    <source>
        <strain>cv. Nipponbare</strain>
    </source>
</reference>
<reference key="5">
    <citation type="journal article" date="2005" name="PLoS Biol.">
        <title>The genomes of Oryza sativa: a history of duplications.</title>
        <authorList>
            <person name="Yu J."/>
            <person name="Wang J."/>
            <person name="Lin W."/>
            <person name="Li S."/>
            <person name="Li H."/>
            <person name="Zhou J."/>
            <person name="Ni P."/>
            <person name="Dong W."/>
            <person name="Hu S."/>
            <person name="Zeng C."/>
            <person name="Zhang J."/>
            <person name="Zhang Y."/>
            <person name="Li R."/>
            <person name="Xu Z."/>
            <person name="Li S."/>
            <person name="Li X."/>
            <person name="Zheng H."/>
            <person name="Cong L."/>
            <person name="Lin L."/>
            <person name="Yin J."/>
            <person name="Geng J."/>
            <person name="Li G."/>
            <person name="Shi J."/>
            <person name="Liu J."/>
            <person name="Lv H."/>
            <person name="Li J."/>
            <person name="Wang J."/>
            <person name="Deng Y."/>
            <person name="Ran L."/>
            <person name="Shi X."/>
            <person name="Wang X."/>
            <person name="Wu Q."/>
            <person name="Li C."/>
            <person name="Ren X."/>
            <person name="Wang J."/>
            <person name="Wang X."/>
            <person name="Li D."/>
            <person name="Liu D."/>
            <person name="Zhang X."/>
            <person name="Ji Z."/>
            <person name="Zhao W."/>
            <person name="Sun Y."/>
            <person name="Zhang Z."/>
            <person name="Bao J."/>
            <person name="Han Y."/>
            <person name="Dong L."/>
            <person name="Ji J."/>
            <person name="Chen P."/>
            <person name="Wu S."/>
            <person name="Liu J."/>
            <person name="Xiao Y."/>
            <person name="Bu D."/>
            <person name="Tan J."/>
            <person name="Yang L."/>
            <person name="Ye C."/>
            <person name="Zhang J."/>
            <person name="Xu J."/>
            <person name="Zhou Y."/>
            <person name="Yu Y."/>
            <person name="Zhang B."/>
            <person name="Zhuang S."/>
            <person name="Wei H."/>
            <person name="Liu B."/>
            <person name="Lei M."/>
            <person name="Yu H."/>
            <person name="Li Y."/>
            <person name="Xu H."/>
            <person name="Wei S."/>
            <person name="He X."/>
            <person name="Fang L."/>
            <person name="Zhang Z."/>
            <person name="Zhang Y."/>
            <person name="Huang X."/>
            <person name="Su Z."/>
            <person name="Tong W."/>
            <person name="Li J."/>
            <person name="Tong Z."/>
            <person name="Li S."/>
            <person name="Ye J."/>
            <person name="Wang L."/>
            <person name="Fang L."/>
            <person name="Lei T."/>
            <person name="Chen C.-S."/>
            <person name="Chen H.-C."/>
            <person name="Xu Z."/>
            <person name="Li H."/>
            <person name="Huang H."/>
            <person name="Zhang F."/>
            <person name="Xu H."/>
            <person name="Li N."/>
            <person name="Zhao C."/>
            <person name="Li S."/>
            <person name="Dong L."/>
            <person name="Huang Y."/>
            <person name="Li L."/>
            <person name="Xi Y."/>
            <person name="Qi Q."/>
            <person name="Li W."/>
            <person name="Zhang B."/>
            <person name="Hu W."/>
            <person name="Zhang Y."/>
            <person name="Tian X."/>
            <person name="Jiao Y."/>
            <person name="Liang X."/>
            <person name="Jin J."/>
            <person name="Gao L."/>
            <person name="Zheng W."/>
            <person name="Hao B."/>
            <person name="Liu S.-M."/>
            <person name="Wang W."/>
            <person name="Yuan L."/>
            <person name="Cao M."/>
            <person name="McDermott J."/>
            <person name="Samudrala R."/>
            <person name="Wang J."/>
            <person name="Wong G.K.-S."/>
            <person name="Yang H."/>
        </authorList>
    </citation>
    <scope>NUCLEOTIDE SEQUENCE [LARGE SCALE GENOMIC DNA]</scope>
    <source>
        <strain>cv. Nipponbare</strain>
    </source>
</reference>
<reference key="6">
    <citation type="journal article" date="2003" name="Science">
        <title>Collection, mapping, and annotation of over 28,000 cDNA clones from japonica rice.</title>
        <authorList>
            <consortium name="The rice full-length cDNA consortium"/>
        </authorList>
    </citation>
    <scope>NUCLEOTIDE SEQUENCE [LARGE SCALE MRNA]</scope>
    <source>
        <strain>cv. Nipponbare</strain>
    </source>
</reference>
<gene>
    <name type="primary">UREG</name>
    <name type="ordered locus">Os05g0565200</name>
    <name type="ordered locus">LOC_Os05g49050</name>
    <name type="ORF">OsJ_19563</name>
    <name type="ORF">OSJNBb0053D02.18</name>
</gene>
<organism>
    <name type="scientific">Oryza sativa subsp. japonica</name>
    <name type="common">Rice</name>
    <dbReference type="NCBI Taxonomy" id="39947"/>
    <lineage>
        <taxon>Eukaryota</taxon>
        <taxon>Viridiplantae</taxon>
        <taxon>Streptophyta</taxon>
        <taxon>Embryophyta</taxon>
        <taxon>Tracheophyta</taxon>
        <taxon>Spermatophyta</taxon>
        <taxon>Magnoliopsida</taxon>
        <taxon>Liliopsida</taxon>
        <taxon>Poales</taxon>
        <taxon>Poaceae</taxon>
        <taxon>BOP clade</taxon>
        <taxon>Oryzoideae</taxon>
        <taxon>Oryzeae</taxon>
        <taxon>Oryzinae</taxon>
        <taxon>Oryza</taxon>
        <taxon>Oryza sativa</taxon>
    </lineage>
</organism>
<accession>Q6AUF3</accession>
<accession>A0A0P0WR16</accession>
<sequence>MASHDHDHDHHHHHSHDDGDHHHSHHQDGSHGGGGGSWVGEDGRVWHSHDGLAPHSHEPIYSPGDFSKRAPPLISRRFAERAFTVGIGGPVGTGKTALMLALCRSLREKYSLAAVTNDIFTKEDGEFLIKHGALPEERIRAVETGGCPHAAIREDISINLGPLEELSNLCKADLLLCESGGDNLAANFSRELADYIIYIIDVSGGDKIPRKGGPGITQADLLIINKTDLAPAVGADLAVMERDALRMREGGPFVFAQVKHGVGVEEIVNHILQAWEIATGNKRR</sequence>